<reference key="1">
    <citation type="submission" date="2007-07" db="EMBL/GenBank/DDBJ databases">
        <title>Complete genome sequence of Campylobacter jejuni subsp doylei 269.97 isolated from human blood.</title>
        <authorList>
            <person name="Fouts D.E."/>
            <person name="Mongodin E.F."/>
            <person name="Puiu D."/>
            <person name="Sebastian Y."/>
            <person name="Miller W.G."/>
            <person name="Mandrell R.E."/>
            <person name="Lastovica A.J."/>
            <person name="Nelson K.E."/>
        </authorList>
    </citation>
    <scope>NUCLEOTIDE SEQUENCE [LARGE SCALE GENOMIC DNA]</scope>
    <source>
        <strain>ATCC BAA-1458 / RM4099 / 269.97</strain>
    </source>
</reference>
<feature type="chain" id="PRO_1000000270" description="Adenine phosphoribosyltransferase">
    <location>
        <begin position="1"/>
        <end position="182"/>
    </location>
</feature>
<comment type="function">
    <text evidence="1">Catalyzes a salvage reaction resulting in the formation of AMP, that is energically less costly than de novo synthesis.</text>
</comment>
<comment type="catalytic activity">
    <reaction evidence="1">
        <text>AMP + diphosphate = 5-phospho-alpha-D-ribose 1-diphosphate + adenine</text>
        <dbReference type="Rhea" id="RHEA:16609"/>
        <dbReference type="ChEBI" id="CHEBI:16708"/>
        <dbReference type="ChEBI" id="CHEBI:33019"/>
        <dbReference type="ChEBI" id="CHEBI:58017"/>
        <dbReference type="ChEBI" id="CHEBI:456215"/>
        <dbReference type="EC" id="2.4.2.7"/>
    </reaction>
</comment>
<comment type="pathway">
    <text evidence="1">Purine metabolism; AMP biosynthesis via salvage pathway; AMP from adenine: step 1/1.</text>
</comment>
<comment type="subunit">
    <text evidence="1">Homodimer.</text>
</comment>
<comment type="subcellular location">
    <subcellularLocation>
        <location evidence="1">Cytoplasm</location>
    </subcellularLocation>
</comment>
<comment type="similarity">
    <text evidence="1">Belongs to the purine/pyrimidine phosphoribosyltransferase family.</text>
</comment>
<keyword id="KW-0963">Cytoplasm</keyword>
<keyword id="KW-0328">Glycosyltransferase</keyword>
<keyword id="KW-0660">Purine salvage</keyword>
<keyword id="KW-0808">Transferase</keyword>
<sequence length="182" mass="20689">MIKLTQEEQKYLLDSIRIIPDFPKKGIIFRDITTLLNNKEALNFLLKHLKERYKDYNLDFIAGTESRGFIFASMICAKLNLPFVPIRKPGKLPFETFSCEYDLEYGSDKVELHKDAFKNIQNARVLLVDDLIATGGTAIASYELIQKAGAKCVEACFLMNLKDLNGANKLEKLTSVYSVLEI</sequence>
<protein>
    <recommendedName>
        <fullName evidence="1">Adenine phosphoribosyltransferase</fullName>
        <shortName evidence="1">APRT</shortName>
        <ecNumber evidence="1">2.4.2.7</ecNumber>
    </recommendedName>
</protein>
<organism>
    <name type="scientific">Campylobacter jejuni subsp. doylei (strain ATCC BAA-1458 / RM4099 / 269.97)</name>
    <dbReference type="NCBI Taxonomy" id="360109"/>
    <lineage>
        <taxon>Bacteria</taxon>
        <taxon>Pseudomonadati</taxon>
        <taxon>Campylobacterota</taxon>
        <taxon>Epsilonproteobacteria</taxon>
        <taxon>Campylobacterales</taxon>
        <taxon>Campylobacteraceae</taxon>
        <taxon>Campylobacter</taxon>
    </lineage>
</organism>
<name>APT_CAMJD</name>
<accession>A7H3C4</accession>
<dbReference type="EC" id="2.4.2.7" evidence="1"/>
<dbReference type="EMBL" id="CP000768">
    <property type="protein sequence ID" value="ABS43878.1"/>
    <property type="molecule type" value="Genomic_DNA"/>
</dbReference>
<dbReference type="SMR" id="A7H3C4"/>
<dbReference type="KEGG" id="cjd:JJD26997_0887"/>
<dbReference type="HOGENOM" id="CLU_063339_3_0_7"/>
<dbReference type="UniPathway" id="UPA00588">
    <property type="reaction ID" value="UER00646"/>
</dbReference>
<dbReference type="Proteomes" id="UP000002302">
    <property type="component" value="Chromosome"/>
</dbReference>
<dbReference type="GO" id="GO:0005737">
    <property type="term" value="C:cytoplasm"/>
    <property type="evidence" value="ECO:0007669"/>
    <property type="project" value="UniProtKB-SubCell"/>
</dbReference>
<dbReference type="GO" id="GO:0002055">
    <property type="term" value="F:adenine binding"/>
    <property type="evidence" value="ECO:0007669"/>
    <property type="project" value="TreeGrafter"/>
</dbReference>
<dbReference type="GO" id="GO:0003999">
    <property type="term" value="F:adenine phosphoribosyltransferase activity"/>
    <property type="evidence" value="ECO:0007669"/>
    <property type="project" value="UniProtKB-UniRule"/>
</dbReference>
<dbReference type="GO" id="GO:0016208">
    <property type="term" value="F:AMP binding"/>
    <property type="evidence" value="ECO:0007669"/>
    <property type="project" value="TreeGrafter"/>
</dbReference>
<dbReference type="GO" id="GO:0006168">
    <property type="term" value="P:adenine salvage"/>
    <property type="evidence" value="ECO:0007669"/>
    <property type="project" value="InterPro"/>
</dbReference>
<dbReference type="GO" id="GO:0044209">
    <property type="term" value="P:AMP salvage"/>
    <property type="evidence" value="ECO:0007669"/>
    <property type="project" value="UniProtKB-UniRule"/>
</dbReference>
<dbReference type="GO" id="GO:0006166">
    <property type="term" value="P:purine ribonucleoside salvage"/>
    <property type="evidence" value="ECO:0007669"/>
    <property type="project" value="UniProtKB-KW"/>
</dbReference>
<dbReference type="CDD" id="cd06223">
    <property type="entry name" value="PRTases_typeI"/>
    <property type="match status" value="1"/>
</dbReference>
<dbReference type="FunFam" id="3.40.50.2020:FF:000021">
    <property type="entry name" value="Adenine phosphoribosyltransferase"/>
    <property type="match status" value="1"/>
</dbReference>
<dbReference type="Gene3D" id="3.40.50.2020">
    <property type="match status" value="1"/>
</dbReference>
<dbReference type="HAMAP" id="MF_00004">
    <property type="entry name" value="Aden_phosphoribosyltr"/>
    <property type="match status" value="1"/>
</dbReference>
<dbReference type="InterPro" id="IPR005764">
    <property type="entry name" value="Ade_phspho_trans"/>
</dbReference>
<dbReference type="InterPro" id="IPR000836">
    <property type="entry name" value="PRibTrfase_dom"/>
</dbReference>
<dbReference type="InterPro" id="IPR029057">
    <property type="entry name" value="PRTase-like"/>
</dbReference>
<dbReference type="InterPro" id="IPR050054">
    <property type="entry name" value="UPRTase/APRTase"/>
</dbReference>
<dbReference type="NCBIfam" id="TIGR01090">
    <property type="entry name" value="apt"/>
    <property type="match status" value="1"/>
</dbReference>
<dbReference type="NCBIfam" id="NF002634">
    <property type="entry name" value="PRK02304.1-3"/>
    <property type="match status" value="1"/>
</dbReference>
<dbReference type="NCBIfam" id="NF002636">
    <property type="entry name" value="PRK02304.1-5"/>
    <property type="match status" value="1"/>
</dbReference>
<dbReference type="PANTHER" id="PTHR32315">
    <property type="entry name" value="ADENINE PHOSPHORIBOSYLTRANSFERASE"/>
    <property type="match status" value="1"/>
</dbReference>
<dbReference type="PANTHER" id="PTHR32315:SF3">
    <property type="entry name" value="ADENINE PHOSPHORIBOSYLTRANSFERASE"/>
    <property type="match status" value="1"/>
</dbReference>
<dbReference type="Pfam" id="PF00156">
    <property type="entry name" value="Pribosyltran"/>
    <property type="match status" value="1"/>
</dbReference>
<dbReference type="SUPFAM" id="SSF53271">
    <property type="entry name" value="PRTase-like"/>
    <property type="match status" value="1"/>
</dbReference>
<dbReference type="PROSITE" id="PS00103">
    <property type="entry name" value="PUR_PYR_PR_TRANSFER"/>
    <property type="match status" value="1"/>
</dbReference>
<gene>
    <name evidence="1" type="primary">apt</name>
    <name type="ordered locus">JJD26997_0887</name>
</gene>
<proteinExistence type="inferred from homology"/>
<evidence type="ECO:0000255" key="1">
    <source>
        <dbReference type="HAMAP-Rule" id="MF_00004"/>
    </source>
</evidence>